<organism>
    <name type="scientific">Staphylococcus aureus (strain MW2)</name>
    <dbReference type="NCBI Taxonomy" id="196620"/>
    <lineage>
        <taxon>Bacteria</taxon>
        <taxon>Bacillati</taxon>
        <taxon>Bacillota</taxon>
        <taxon>Bacilli</taxon>
        <taxon>Bacillales</taxon>
        <taxon>Staphylococcaceae</taxon>
        <taxon>Staphylococcus</taxon>
    </lineage>
</organism>
<accession>Q8NVK5</accession>
<dbReference type="EC" id="3.4.-.-" evidence="1"/>
<dbReference type="EMBL" id="BA000033">
    <property type="protein sequence ID" value="BAB95825.1"/>
    <property type="molecule type" value="Genomic_DNA"/>
</dbReference>
<dbReference type="RefSeq" id="WP_001105705.1">
    <property type="nucleotide sequence ID" value="NC_003923.1"/>
</dbReference>
<dbReference type="MEROPS" id="C75.001"/>
<dbReference type="TCDB" id="9.B.46.1.1">
    <property type="family name" value="the staphylococcus aureus putative quorum sensing peptide exporter, agrb (agrb) family"/>
</dbReference>
<dbReference type="KEGG" id="sam:MW1960"/>
<dbReference type="HOGENOM" id="CLU_098969_2_2_9"/>
<dbReference type="GO" id="GO:0005886">
    <property type="term" value="C:plasma membrane"/>
    <property type="evidence" value="ECO:0007669"/>
    <property type="project" value="UniProtKB-SubCell"/>
</dbReference>
<dbReference type="GO" id="GO:0008233">
    <property type="term" value="F:peptidase activity"/>
    <property type="evidence" value="ECO:0007669"/>
    <property type="project" value="UniProtKB-UniRule"/>
</dbReference>
<dbReference type="GO" id="GO:0006508">
    <property type="term" value="P:proteolysis"/>
    <property type="evidence" value="ECO:0007669"/>
    <property type="project" value="UniProtKB-KW"/>
</dbReference>
<dbReference type="GO" id="GO:0009372">
    <property type="term" value="P:quorum sensing"/>
    <property type="evidence" value="ECO:0007669"/>
    <property type="project" value="UniProtKB-UniRule"/>
</dbReference>
<dbReference type="HAMAP" id="MF_00784">
    <property type="entry name" value="AgrB"/>
    <property type="match status" value="1"/>
</dbReference>
<dbReference type="InterPro" id="IPR006741">
    <property type="entry name" value="AgrB"/>
</dbReference>
<dbReference type="Pfam" id="PF04647">
    <property type="entry name" value="AgrB"/>
    <property type="match status" value="1"/>
</dbReference>
<dbReference type="SMART" id="SM00793">
    <property type="entry name" value="AgrB"/>
    <property type="match status" value="1"/>
</dbReference>
<proteinExistence type="inferred from homology"/>
<evidence type="ECO:0000255" key="1">
    <source>
        <dbReference type="HAMAP-Rule" id="MF_00784"/>
    </source>
</evidence>
<comment type="function">
    <text evidence="1">Essential for the production of a quorum sensing system signal molecule, the autoinducing peptide (AIP). This quorum sensing system is responsible for the regulation of the expression of virulence factor genes. Involved in the proteolytic processing of AgrD, the precursor of AIP.</text>
</comment>
<comment type="subcellular location">
    <subcellularLocation>
        <location evidence="1">Cell membrane</location>
        <topology evidence="1">Multi-pass membrane protein</topology>
    </subcellularLocation>
</comment>
<comment type="similarity">
    <text evidence="1">Belongs to the AgrB family.</text>
</comment>
<gene>
    <name evidence="1" type="primary">agrB</name>
    <name type="ordered locus">MW1960</name>
</gene>
<reference key="1">
    <citation type="journal article" date="2002" name="Lancet">
        <title>Genome and virulence determinants of high virulence community-acquired MRSA.</title>
        <authorList>
            <person name="Baba T."/>
            <person name="Takeuchi F."/>
            <person name="Kuroda M."/>
            <person name="Yuzawa H."/>
            <person name="Aoki K."/>
            <person name="Oguchi A."/>
            <person name="Nagai Y."/>
            <person name="Iwama N."/>
            <person name="Asano K."/>
            <person name="Naimi T."/>
            <person name="Kuroda H."/>
            <person name="Cui L."/>
            <person name="Yamamoto K."/>
            <person name="Hiramatsu K."/>
        </authorList>
    </citation>
    <scope>NUCLEOTIDE SEQUENCE [LARGE SCALE GENOMIC DNA]</scope>
    <source>
        <strain>MW2</strain>
    </source>
</reference>
<name>AGRB_STAAW</name>
<protein>
    <recommendedName>
        <fullName evidence="1">Accessory gene regulator protein B</fullName>
        <ecNumber evidence="1">3.4.-.-</ecNumber>
    </recommendedName>
</protein>
<sequence length="187" mass="21801">MNYFDNKIDQFATYLQKRNNLDHIQFLQVRLGMQVLAKNIGKLIVMYTIAYILNIFIFTLITNISFYLIRRYAHGAHAPSSFWCYIESITLFIVLPLLVLHFHINETLMMFLALISVGVVIKYAPAATKKKPIPARLVKQKRYFSIIISTILFIITLFVKEPYTQFIQLGIIIQAITLLPIYYSKED</sequence>
<keyword id="KW-1003">Cell membrane</keyword>
<keyword id="KW-0378">Hydrolase</keyword>
<keyword id="KW-0472">Membrane</keyword>
<keyword id="KW-0645">Protease</keyword>
<keyword id="KW-0673">Quorum sensing</keyword>
<keyword id="KW-0812">Transmembrane</keyword>
<keyword id="KW-1133">Transmembrane helix</keyword>
<keyword id="KW-0843">Virulence</keyword>
<feature type="chain" id="PRO_0000168125" description="Accessory gene regulator protein B">
    <location>
        <begin position="1"/>
        <end position="187"/>
    </location>
</feature>
<feature type="transmembrane region" description="Helical" evidence="1">
    <location>
        <begin position="49"/>
        <end position="69"/>
    </location>
</feature>
<feature type="transmembrane region" description="Helical" evidence="1">
    <location>
        <begin position="82"/>
        <end position="102"/>
    </location>
</feature>
<feature type="transmembrane region" description="Helical" evidence="1">
    <location>
        <begin position="107"/>
        <end position="127"/>
    </location>
</feature>
<feature type="transmembrane region" description="Helical" evidence="1">
    <location>
        <begin position="143"/>
        <end position="163"/>
    </location>
</feature>
<feature type="transmembrane region" description="Helical" evidence="1">
    <location>
        <begin position="164"/>
        <end position="184"/>
    </location>
</feature>